<accession>Q1DLJ4</accession>
<accession>J3K1M2</accession>
<feature type="chain" id="PRO_0000370487" description="Pescadillo homolog">
    <location>
        <begin position="1"/>
        <end position="688"/>
    </location>
</feature>
<feature type="domain" description="BRCT" evidence="1">
    <location>
        <begin position="351"/>
        <end position="470"/>
    </location>
</feature>
<feature type="region of interest" description="Disordered" evidence="2">
    <location>
        <begin position="411"/>
        <end position="442"/>
    </location>
</feature>
<feature type="region of interest" description="Disordered" evidence="2">
    <location>
        <begin position="496"/>
        <end position="688"/>
    </location>
</feature>
<feature type="coiled-coil region" evidence="1">
    <location>
        <begin position="496"/>
        <end position="536"/>
    </location>
</feature>
<feature type="coiled-coil region" evidence="1">
    <location>
        <begin position="627"/>
        <end position="686"/>
    </location>
</feature>
<feature type="compositionally biased region" description="Pro residues" evidence="2">
    <location>
        <begin position="412"/>
        <end position="424"/>
    </location>
</feature>
<feature type="compositionally biased region" description="Acidic residues" evidence="2">
    <location>
        <begin position="510"/>
        <end position="519"/>
    </location>
</feature>
<feature type="compositionally biased region" description="Acidic residues" evidence="2">
    <location>
        <begin position="530"/>
        <end position="544"/>
    </location>
</feature>
<feature type="compositionally biased region" description="Acidic residues" evidence="2">
    <location>
        <begin position="554"/>
        <end position="565"/>
    </location>
</feature>
<feature type="compositionally biased region" description="Acidic residues" evidence="2">
    <location>
        <begin position="576"/>
        <end position="589"/>
    </location>
</feature>
<feature type="compositionally biased region" description="Basic residues" evidence="2">
    <location>
        <begin position="619"/>
        <end position="634"/>
    </location>
</feature>
<feature type="compositionally biased region" description="Basic and acidic residues" evidence="2">
    <location>
        <begin position="635"/>
        <end position="646"/>
    </location>
</feature>
<proteinExistence type="inferred from homology"/>
<comment type="function">
    <text evidence="1">Component of the NOP7 complex, which is required for maturation of the 25S and 5.8S ribosomal RNAs and formation of the 60S ribosome.</text>
</comment>
<comment type="subunit">
    <text evidence="1">Component of the NOP7 complex, composed of ERB1, NOP7 and YTM1. The complex is held together by ERB1, which interacts with NOP7 via its N-terminal domain and with YTM1 via a high-affinity interaction between the seven-bladed beta-propeller domains of the 2 proteins. The NOP7 complex associates with the 66S pre-ribosome.</text>
</comment>
<comment type="subcellular location">
    <subcellularLocation>
        <location evidence="1">Nucleus</location>
        <location evidence="1">Nucleolus</location>
    </subcellularLocation>
    <subcellularLocation>
        <location evidence="1">Nucleus</location>
        <location evidence="1">Nucleoplasm</location>
    </subcellularLocation>
</comment>
<comment type="similarity">
    <text evidence="1">Belongs to the pescadillo family.</text>
</comment>
<dbReference type="EMBL" id="GG704913">
    <property type="protein sequence ID" value="EAS30073.3"/>
    <property type="molecule type" value="Genomic_DNA"/>
</dbReference>
<dbReference type="RefSeq" id="XP_001241656.1">
    <property type="nucleotide sequence ID" value="XM_001241655.2"/>
</dbReference>
<dbReference type="SMR" id="Q1DLJ4"/>
<dbReference type="FunCoup" id="Q1DLJ4">
    <property type="interactions" value="1238"/>
</dbReference>
<dbReference type="STRING" id="246410.Q1DLJ4"/>
<dbReference type="GeneID" id="4559787"/>
<dbReference type="KEGG" id="cim:CIMG_08819"/>
<dbReference type="VEuPathDB" id="FungiDB:CIMG_08819"/>
<dbReference type="InParanoid" id="Q1DLJ4"/>
<dbReference type="OMA" id="QKVTWIV"/>
<dbReference type="OrthoDB" id="10264910at2759"/>
<dbReference type="Proteomes" id="UP000001261">
    <property type="component" value="Unassembled WGS sequence"/>
</dbReference>
<dbReference type="GO" id="GO:0005654">
    <property type="term" value="C:nucleoplasm"/>
    <property type="evidence" value="ECO:0007669"/>
    <property type="project" value="UniProtKB-SubCell"/>
</dbReference>
<dbReference type="GO" id="GO:0070545">
    <property type="term" value="C:PeBoW complex"/>
    <property type="evidence" value="ECO:0007669"/>
    <property type="project" value="TreeGrafter"/>
</dbReference>
<dbReference type="GO" id="GO:0030687">
    <property type="term" value="C:preribosome, large subunit precursor"/>
    <property type="evidence" value="ECO:0007669"/>
    <property type="project" value="UniProtKB-UniRule"/>
</dbReference>
<dbReference type="GO" id="GO:0043021">
    <property type="term" value="F:ribonucleoprotein complex binding"/>
    <property type="evidence" value="ECO:0007669"/>
    <property type="project" value="UniProtKB-UniRule"/>
</dbReference>
<dbReference type="GO" id="GO:0003723">
    <property type="term" value="F:RNA binding"/>
    <property type="evidence" value="ECO:0007669"/>
    <property type="project" value="TreeGrafter"/>
</dbReference>
<dbReference type="GO" id="GO:0000466">
    <property type="term" value="P:maturation of 5.8S rRNA from tricistronic rRNA transcript (SSU-rRNA, 5.8S rRNA, LSU-rRNA)"/>
    <property type="evidence" value="ECO:0007669"/>
    <property type="project" value="UniProtKB-UniRule"/>
</dbReference>
<dbReference type="GO" id="GO:0000463">
    <property type="term" value="P:maturation of LSU-rRNA from tricistronic rRNA transcript (SSU-rRNA, 5.8S rRNA, LSU-rRNA)"/>
    <property type="evidence" value="ECO:0007669"/>
    <property type="project" value="UniProtKB-UniRule"/>
</dbReference>
<dbReference type="CDD" id="cd17709">
    <property type="entry name" value="BRCT_pescadillo_like"/>
    <property type="match status" value="1"/>
</dbReference>
<dbReference type="Gene3D" id="3.40.50.10190">
    <property type="entry name" value="BRCT domain"/>
    <property type="match status" value="1"/>
</dbReference>
<dbReference type="HAMAP" id="MF_03028">
    <property type="entry name" value="Pescadillo"/>
    <property type="match status" value="1"/>
</dbReference>
<dbReference type="InterPro" id="IPR001357">
    <property type="entry name" value="BRCT_dom"/>
</dbReference>
<dbReference type="InterPro" id="IPR036420">
    <property type="entry name" value="BRCT_dom_sf"/>
</dbReference>
<dbReference type="InterPro" id="IPR010613">
    <property type="entry name" value="PES"/>
</dbReference>
<dbReference type="PANTHER" id="PTHR12221">
    <property type="entry name" value="PESCADILLO - RELATED"/>
    <property type="match status" value="1"/>
</dbReference>
<dbReference type="PANTHER" id="PTHR12221:SF6">
    <property type="entry name" value="PESCADILLO HOMOLOG"/>
    <property type="match status" value="1"/>
</dbReference>
<dbReference type="Pfam" id="PF06732">
    <property type="entry name" value="Pescadillo_N"/>
    <property type="match status" value="1"/>
</dbReference>
<dbReference type="SUPFAM" id="SSF52113">
    <property type="entry name" value="BRCT domain"/>
    <property type="match status" value="1"/>
</dbReference>
<dbReference type="PROSITE" id="PS50172">
    <property type="entry name" value="BRCT"/>
    <property type="match status" value="1"/>
</dbReference>
<keyword id="KW-0175">Coiled coil</keyword>
<keyword id="KW-0539">Nucleus</keyword>
<keyword id="KW-1185">Reference proteome</keyword>
<keyword id="KW-0690">Ribosome biogenesis</keyword>
<keyword id="KW-0698">rRNA processing</keyword>
<reference key="1">
    <citation type="journal article" date="2009" name="Genome Res.">
        <title>Comparative genomic analyses of the human fungal pathogens Coccidioides and their relatives.</title>
        <authorList>
            <person name="Sharpton T.J."/>
            <person name="Stajich J.E."/>
            <person name="Rounsley S.D."/>
            <person name="Gardner M.J."/>
            <person name="Wortman J.R."/>
            <person name="Jordar V.S."/>
            <person name="Maiti R."/>
            <person name="Kodira C.D."/>
            <person name="Neafsey D.E."/>
            <person name="Zeng Q."/>
            <person name="Hung C.-Y."/>
            <person name="McMahan C."/>
            <person name="Muszewska A."/>
            <person name="Grynberg M."/>
            <person name="Mandel M.A."/>
            <person name="Kellner E.M."/>
            <person name="Barker B.M."/>
            <person name="Galgiani J.N."/>
            <person name="Orbach M.J."/>
            <person name="Kirkland T.N."/>
            <person name="Cole G.T."/>
            <person name="Henn M.R."/>
            <person name="Birren B.W."/>
            <person name="Taylor J.W."/>
        </authorList>
    </citation>
    <scope>NUCLEOTIDE SEQUENCE [LARGE SCALE GENOMIC DNA]</scope>
    <source>
        <strain>RS</strain>
    </source>
</reference>
<reference key="2">
    <citation type="journal article" date="2010" name="Genome Res.">
        <title>Population genomic sequencing of Coccidioides fungi reveals recent hybridization and transposon control.</title>
        <authorList>
            <person name="Neafsey D.E."/>
            <person name="Barker B.M."/>
            <person name="Sharpton T.J."/>
            <person name="Stajich J.E."/>
            <person name="Park D.J."/>
            <person name="Whiston E."/>
            <person name="Hung C.-Y."/>
            <person name="McMahan C."/>
            <person name="White J."/>
            <person name="Sykes S."/>
            <person name="Heiman D."/>
            <person name="Young S."/>
            <person name="Zeng Q."/>
            <person name="Abouelleil A."/>
            <person name="Aftuck L."/>
            <person name="Bessette D."/>
            <person name="Brown A."/>
            <person name="FitzGerald M."/>
            <person name="Lui A."/>
            <person name="Macdonald J.P."/>
            <person name="Priest M."/>
            <person name="Orbach M.J."/>
            <person name="Galgiani J.N."/>
            <person name="Kirkland T.N."/>
            <person name="Cole G.T."/>
            <person name="Birren B.W."/>
            <person name="Henn M.R."/>
            <person name="Taylor J.W."/>
            <person name="Rounsley S.D."/>
        </authorList>
    </citation>
    <scope>GENOME REANNOTATION</scope>
    <source>
        <strain>RS</strain>
    </source>
</reference>
<gene>
    <name evidence="1" type="primary">NOP7</name>
    <name type="ORF">CIMG_08819</name>
</gene>
<evidence type="ECO:0000255" key="1">
    <source>
        <dbReference type="HAMAP-Rule" id="MF_03028"/>
    </source>
</evidence>
<evidence type="ECO:0000256" key="2">
    <source>
        <dbReference type="SAM" id="MobiDB-lite"/>
    </source>
</evidence>
<organism>
    <name type="scientific">Coccidioides immitis (strain RS)</name>
    <name type="common">Valley fever fungus</name>
    <dbReference type="NCBI Taxonomy" id="246410"/>
    <lineage>
        <taxon>Eukaryota</taxon>
        <taxon>Fungi</taxon>
        <taxon>Dikarya</taxon>
        <taxon>Ascomycota</taxon>
        <taxon>Pezizomycotina</taxon>
        <taxon>Eurotiomycetes</taxon>
        <taxon>Eurotiomycetidae</taxon>
        <taxon>Onygenales</taxon>
        <taxon>Onygenaceae</taxon>
        <taxon>Coccidioides</taxon>
    </lineage>
</organism>
<sequence>MAKIKKKGTSGAAKNYITRTQAVRKLQISLPDFRRLCIFKGIYPREPRNKKKASKTSTPSTTFYYTRDIQYLLHEPLLKRFRDQKALSKKIARSLGRGDVGDAARLEKNNAPKITLDHIVKERYPTFIDALRDLDDALSLLFLFANLPSTANVPPKTIALCQRLCHEFQHYLIATNSLRKSFLSIKGIYYQATIQGQDILWLVPYRFVQQVTGDVDYRIMATFVEFYTTLLGFVNFRLYTSIGLVYPPKFDSRSDERGAELAAFTLEGRKVGEMQKAISSEPQTNGQLAKSDSAANDIQAKVDNILKETTRNNEPDDEAVDVEDNVDAIDKFETTAPEADTLPQPQMSGNEVASLFASFTFFISREAPRGPLEFLLRAFGCKRVGWDAVLGEGAFTHDETDPRITHQIVDRPPLPESALPPLPQNPGEGAEKAPRVRPGTRMPGRMYIQPQWVWDCVNEGKLLRHDLYAPGATLPPHLSPWVKASKGGYDPRLSLAEQESDGEAERQAEEENEEEESEVEGLSMDKEMVETENSEAGESDEESVDGGMDVDIPGSDDEEEESEEDNALRELGGSDEAADVQSESEDDEEAARNQHQMELEAEAAGLPFTGADGTGTSSKKSKKQKPLAKKHAAQKKKEQEELERQKMMMSRKKRKLLDKMLYSNKKKDEEAEKLRRKRRKIEQGTKGR</sequence>
<protein>
    <recommendedName>
        <fullName evidence="1">Pescadillo homolog</fullName>
    </recommendedName>
    <alternativeName>
        <fullName evidence="1">Nucleolar protein 7 homolog</fullName>
    </alternativeName>
</protein>
<name>PESC_COCIM</name>